<organism>
    <name type="scientific">Aliivibrio fischeri (strain ATCC 700601 / ES114)</name>
    <name type="common">Vibrio fischeri</name>
    <dbReference type="NCBI Taxonomy" id="312309"/>
    <lineage>
        <taxon>Bacteria</taxon>
        <taxon>Pseudomonadati</taxon>
        <taxon>Pseudomonadota</taxon>
        <taxon>Gammaproteobacteria</taxon>
        <taxon>Vibrionales</taxon>
        <taxon>Vibrionaceae</taxon>
        <taxon>Aliivibrio</taxon>
    </lineage>
</organism>
<sequence length="307" mass="34198">MKDESSFFTIDHIIELENGQSIRVWETPPKSDTHKKNSTIVIAAGFARRMDHFAGLAEYLSSNGFRVIRYDSLHHVGLSSGQIDEFSMSIGKHSLLIVVGWLRAKGIQNLGIIAASLSARIAYEVINDIDASFLITAVGVVNLQDTLEKALKYDYLRLPIDELPDDLDFEGHNLGSKVFVTDCLKNEWDTLGSTFKAVQGLNIPFIAFTANGDSWVNQSDVEKMIDNIDTTQCKLYSLIGSSHDLGENLVVLRNFYESVTRAAVALDKGSLDLDIEIVEPGFEDLTSTTVKERRLRNKIENELLELA</sequence>
<protein>
    <recommendedName>
        <fullName evidence="1">Acyl transferase</fullName>
        <shortName evidence="1">ACT</shortName>
        <ecNumber evidence="1">2.3.1.-</ecNumber>
    </recommendedName>
    <alternativeName>
        <fullName evidence="1">C14ACP-TE</fullName>
    </alternativeName>
    <alternativeName>
        <fullName evidence="1">Myristoyl-ACP-specific thioesterase</fullName>
    </alternativeName>
</protein>
<accession>Q5DZ04</accession>
<keyword id="KW-0012">Acyltransferase</keyword>
<keyword id="KW-0455">Luminescence</keyword>
<keyword id="KW-1185">Reference proteome</keyword>
<keyword id="KW-0808">Transferase</keyword>
<feature type="chain" id="PRO_1000046810" description="Acyl transferase">
    <location>
        <begin position="1"/>
        <end position="307"/>
    </location>
</feature>
<feature type="active site" description="Charge relay system" evidence="1">
    <location>
        <position position="116"/>
    </location>
</feature>
<feature type="active site" description="Charge relay system" evidence="1">
    <location>
        <position position="213"/>
    </location>
</feature>
<feature type="active site" description="Charge relay system" evidence="1">
    <location>
        <position position="243"/>
    </location>
</feature>
<name>LUXD_ALIF1</name>
<reference key="1">
    <citation type="journal article" date="2005" name="Proc. Natl. Acad. Sci. U.S.A.">
        <title>Complete genome sequence of Vibrio fischeri: a symbiotic bacterium with pathogenic congeners.</title>
        <authorList>
            <person name="Ruby E.G."/>
            <person name="Urbanowski M."/>
            <person name="Campbell J."/>
            <person name="Dunn A."/>
            <person name="Faini M."/>
            <person name="Gunsalus R."/>
            <person name="Lostroh P."/>
            <person name="Lupp C."/>
            <person name="McCann J."/>
            <person name="Millikan D."/>
            <person name="Schaefer A."/>
            <person name="Stabb E."/>
            <person name="Stevens A."/>
            <person name="Visick K."/>
            <person name="Whistler C."/>
            <person name="Greenberg E.P."/>
        </authorList>
    </citation>
    <scope>NUCLEOTIDE SEQUENCE [LARGE SCALE GENOMIC DNA]</scope>
    <source>
        <strain>ATCC 700601 / ES114</strain>
    </source>
</reference>
<proteinExistence type="inferred from homology"/>
<dbReference type="EC" id="2.3.1.-" evidence="1"/>
<dbReference type="EMBL" id="CP000021">
    <property type="protein sequence ID" value="AAW87992.1"/>
    <property type="molecule type" value="Genomic_DNA"/>
</dbReference>
<dbReference type="RefSeq" id="WP_011263742.1">
    <property type="nucleotide sequence ID" value="NC_006841.2"/>
</dbReference>
<dbReference type="RefSeq" id="YP_206880.1">
    <property type="nucleotide sequence ID" value="NC_006841.2"/>
</dbReference>
<dbReference type="SMR" id="Q5DZ04"/>
<dbReference type="STRING" id="312309.VF_A0922"/>
<dbReference type="ESTHER" id="vibf1-q5dz04">
    <property type="family name" value="Thioesterase_acyl-transferase"/>
</dbReference>
<dbReference type="EnsemblBacteria" id="AAW87992">
    <property type="protein sequence ID" value="AAW87992"/>
    <property type="gene ID" value="VF_A0922"/>
</dbReference>
<dbReference type="GeneID" id="54166243"/>
<dbReference type="KEGG" id="vfi:VF_A0922"/>
<dbReference type="PATRIC" id="fig|312309.11.peg.3524"/>
<dbReference type="eggNOG" id="COG1073">
    <property type="taxonomic scope" value="Bacteria"/>
</dbReference>
<dbReference type="HOGENOM" id="CLU_882365_0_0_6"/>
<dbReference type="OrthoDB" id="6458549at2"/>
<dbReference type="UniPathway" id="UPA00569"/>
<dbReference type="Proteomes" id="UP000000537">
    <property type="component" value="Chromosome II"/>
</dbReference>
<dbReference type="GO" id="GO:0016747">
    <property type="term" value="F:acyltransferase activity, transferring groups other than amino-acyl groups"/>
    <property type="evidence" value="ECO:0007669"/>
    <property type="project" value="UniProtKB-UniRule"/>
</dbReference>
<dbReference type="GO" id="GO:0008218">
    <property type="term" value="P:bioluminescence"/>
    <property type="evidence" value="ECO:0007669"/>
    <property type="project" value="UniProtKB-UniRule"/>
</dbReference>
<dbReference type="GO" id="GO:0006631">
    <property type="term" value="P:fatty acid metabolic process"/>
    <property type="evidence" value="ECO:0007669"/>
    <property type="project" value="InterPro"/>
</dbReference>
<dbReference type="Gene3D" id="3.40.50.1820">
    <property type="entry name" value="alpha/beta hydrolase"/>
    <property type="match status" value="1"/>
</dbReference>
<dbReference type="HAMAP" id="MF_00774">
    <property type="entry name" value="LuxD"/>
    <property type="match status" value="1"/>
</dbReference>
<dbReference type="InterPro" id="IPR029058">
    <property type="entry name" value="AB_hydrolase_fold"/>
</dbReference>
<dbReference type="InterPro" id="IPR003157">
    <property type="entry name" value="LuxD"/>
</dbReference>
<dbReference type="NCBIfam" id="NF010127">
    <property type="entry name" value="PRK13604.1"/>
    <property type="match status" value="1"/>
</dbReference>
<dbReference type="Pfam" id="PF02273">
    <property type="entry name" value="Acyl_transf_2"/>
    <property type="match status" value="1"/>
</dbReference>
<dbReference type="PIRSF" id="PIRSF009416">
    <property type="entry name" value="LuxD"/>
    <property type="match status" value="1"/>
</dbReference>
<dbReference type="SUPFAM" id="SSF53474">
    <property type="entry name" value="alpha/beta-Hydrolases"/>
    <property type="match status" value="1"/>
</dbReference>
<evidence type="ECO:0000255" key="1">
    <source>
        <dbReference type="HAMAP-Rule" id="MF_00774"/>
    </source>
</evidence>
<comment type="function">
    <text evidence="1">Acyl transferase is part of the fatty acid reductase system required for aldehyde biosynthesis; it produces fatty acids for the luminescent reaction.</text>
</comment>
<comment type="pathway">
    <text evidence="1">Lipid metabolism; fatty acid reduction for biolumincescence.</text>
</comment>
<comment type="similarity">
    <text evidence="1">Belongs to the LuxD family.</text>
</comment>
<gene>
    <name evidence="1" type="primary">luxD</name>
    <name type="ordered locus">VF_A0922</name>
</gene>